<accession>O31839</accession>
<protein>
    <recommendedName>
        <fullName>Uncharacterized protein YozJ</fullName>
    </recommendedName>
</protein>
<gene>
    <name type="primary">yozJ</name>
    <name type="ordered locus">BSU18900</name>
</gene>
<keyword id="KW-1185">Reference proteome</keyword>
<sequence length="151" mass="17838">MADRYVLIEVNEDGEGRLKDEAVTWIDFRLSIVDFNASEGLNQLMEQISKDVKDELVLVLFNYRVKSSYDSWSGATEYEDFFDVEFFKVIKKNYKKFYQGLVTVELDVGINGFDNIESMPTDSNQNYYRNLIAEWEEFYNEDFIPLSLNKR</sequence>
<dbReference type="EMBL" id="AL009126">
    <property type="protein sequence ID" value="CAB13782.1"/>
    <property type="molecule type" value="Genomic_DNA"/>
</dbReference>
<dbReference type="PIR" id="F69931">
    <property type="entry name" value="F69931"/>
</dbReference>
<dbReference type="RefSeq" id="NP_389771.1">
    <property type="nucleotide sequence ID" value="NC_000964.3"/>
</dbReference>
<dbReference type="RefSeq" id="WP_003231345.1">
    <property type="nucleotide sequence ID" value="NZ_OZ025638.1"/>
</dbReference>
<dbReference type="FunCoup" id="O31839">
    <property type="interactions" value="3"/>
</dbReference>
<dbReference type="STRING" id="224308.BSU18900"/>
<dbReference type="PaxDb" id="224308-BSU18900"/>
<dbReference type="EnsemblBacteria" id="CAB13782">
    <property type="protein sequence ID" value="CAB13782"/>
    <property type="gene ID" value="BSU_18900"/>
</dbReference>
<dbReference type="GeneID" id="939606"/>
<dbReference type="KEGG" id="bsu:BSU18900"/>
<dbReference type="PATRIC" id="fig|224308.179.peg.2064"/>
<dbReference type="InParanoid" id="O31839"/>
<dbReference type="OrthoDB" id="9862346at2"/>
<dbReference type="BioCyc" id="BSUB:BSU18900-MONOMER"/>
<dbReference type="Proteomes" id="UP000001570">
    <property type="component" value="Chromosome"/>
</dbReference>
<feature type="chain" id="PRO_0000049671" description="Uncharacterized protein YozJ">
    <location>
        <begin position="1"/>
        <end position="151"/>
    </location>
</feature>
<reference key="1">
    <citation type="journal article" date="1997" name="Nature">
        <title>The complete genome sequence of the Gram-positive bacterium Bacillus subtilis.</title>
        <authorList>
            <person name="Kunst F."/>
            <person name="Ogasawara N."/>
            <person name="Moszer I."/>
            <person name="Albertini A.M."/>
            <person name="Alloni G."/>
            <person name="Azevedo V."/>
            <person name="Bertero M.G."/>
            <person name="Bessieres P."/>
            <person name="Bolotin A."/>
            <person name="Borchert S."/>
            <person name="Borriss R."/>
            <person name="Boursier L."/>
            <person name="Brans A."/>
            <person name="Braun M."/>
            <person name="Brignell S.C."/>
            <person name="Bron S."/>
            <person name="Brouillet S."/>
            <person name="Bruschi C.V."/>
            <person name="Caldwell B."/>
            <person name="Capuano V."/>
            <person name="Carter N.M."/>
            <person name="Choi S.-K."/>
            <person name="Codani J.-J."/>
            <person name="Connerton I.F."/>
            <person name="Cummings N.J."/>
            <person name="Daniel R.A."/>
            <person name="Denizot F."/>
            <person name="Devine K.M."/>
            <person name="Duesterhoeft A."/>
            <person name="Ehrlich S.D."/>
            <person name="Emmerson P.T."/>
            <person name="Entian K.-D."/>
            <person name="Errington J."/>
            <person name="Fabret C."/>
            <person name="Ferrari E."/>
            <person name="Foulger D."/>
            <person name="Fritz C."/>
            <person name="Fujita M."/>
            <person name="Fujita Y."/>
            <person name="Fuma S."/>
            <person name="Galizzi A."/>
            <person name="Galleron N."/>
            <person name="Ghim S.-Y."/>
            <person name="Glaser P."/>
            <person name="Goffeau A."/>
            <person name="Golightly E.J."/>
            <person name="Grandi G."/>
            <person name="Guiseppi G."/>
            <person name="Guy B.J."/>
            <person name="Haga K."/>
            <person name="Haiech J."/>
            <person name="Harwood C.R."/>
            <person name="Henaut A."/>
            <person name="Hilbert H."/>
            <person name="Holsappel S."/>
            <person name="Hosono S."/>
            <person name="Hullo M.-F."/>
            <person name="Itaya M."/>
            <person name="Jones L.-M."/>
            <person name="Joris B."/>
            <person name="Karamata D."/>
            <person name="Kasahara Y."/>
            <person name="Klaerr-Blanchard M."/>
            <person name="Klein C."/>
            <person name="Kobayashi Y."/>
            <person name="Koetter P."/>
            <person name="Koningstein G."/>
            <person name="Krogh S."/>
            <person name="Kumano M."/>
            <person name="Kurita K."/>
            <person name="Lapidus A."/>
            <person name="Lardinois S."/>
            <person name="Lauber J."/>
            <person name="Lazarevic V."/>
            <person name="Lee S.-M."/>
            <person name="Levine A."/>
            <person name="Liu H."/>
            <person name="Masuda S."/>
            <person name="Mauel C."/>
            <person name="Medigue C."/>
            <person name="Medina N."/>
            <person name="Mellado R.P."/>
            <person name="Mizuno M."/>
            <person name="Moestl D."/>
            <person name="Nakai S."/>
            <person name="Noback M."/>
            <person name="Noone D."/>
            <person name="O'Reilly M."/>
            <person name="Ogawa K."/>
            <person name="Ogiwara A."/>
            <person name="Oudega B."/>
            <person name="Park S.-H."/>
            <person name="Parro V."/>
            <person name="Pohl T.M."/>
            <person name="Portetelle D."/>
            <person name="Porwollik S."/>
            <person name="Prescott A.M."/>
            <person name="Presecan E."/>
            <person name="Pujic P."/>
            <person name="Purnelle B."/>
            <person name="Rapoport G."/>
            <person name="Rey M."/>
            <person name="Reynolds S."/>
            <person name="Rieger M."/>
            <person name="Rivolta C."/>
            <person name="Rocha E."/>
            <person name="Roche B."/>
            <person name="Rose M."/>
            <person name="Sadaie Y."/>
            <person name="Sato T."/>
            <person name="Scanlan E."/>
            <person name="Schleich S."/>
            <person name="Schroeter R."/>
            <person name="Scoffone F."/>
            <person name="Sekiguchi J."/>
            <person name="Sekowska A."/>
            <person name="Seror S.J."/>
            <person name="Serror P."/>
            <person name="Shin B.-S."/>
            <person name="Soldo B."/>
            <person name="Sorokin A."/>
            <person name="Tacconi E."/>
            <person name="Takagi T."/>
            <person name="Takahashi H."/>
            <person name="Takemaru K."/>
            <person name="Takeuchi M."/>
            <person name="Tamakoshi A."/>
            <person name="Tanaka T."/>
            <person name="Terpstra P."/>
            <person name="Tognoni A."/>
            <person name="Tosato V."/>
            <person name="Uchiyama S."/>
            <person name="Vandenbol M."/>
            <person name="Vannier F."/>
            <person name="Vassarotti A."/>
            <person name="Viari A."/>
            <person name="Wambutt R."/>
            <person name="Wedler E."/>
            <person name="Wedler H."/>
            <person name="Weitzenegger T."/>
            <person name="Winters P."/>
            <person name="Wipat A."/>
            <person name="Yamamoto H."/>
            <person name="Yamane K."/>
            <person name="Yasumoto K."/>
            <person name="Yata K."/>
            <person name="Yoshida K."/>
            <person name="Yoshikawa H.-F."/>
            <person name="Zumstein E."/>
            <person name="Yoshikawa H."/>
            <person name="Danchin A."/>
        </authorList>
    </citation>
    <scope>NUCLEOTIDE SEQUENCE [LARGE SCALE GENOMIC DNA]</scope>
    <source>
        <strain>168</strain>
    </source>
</reference>
<proteinExistence type="predicted"/>
<organism>
    <name type="scientific">Bacillus subtilis (strain 168)</name>
    <dbReference type="NCBI Taxonomy" id="224308"/>
    <lineage>
        <taxon>Bacteria</taxon>
        <taxon>Bacillati</taxon>
        <taxon>Bacillota</taxon>
        <taxon>Bacilli</taxon>
        <taxon>Bacillales</taxon>
        <taxon>Bacillaceae</taxon>
        <taxon>Bacillus</taxon>
    </lineage>
</organism>
<name>YOZJ_BACSU</name>